<sequence>MNQLFGSDKLRLPQRAQAGIAFVRYLIARMNHDRINVNAGYLAYITLLSIVPMLTVLLSILSKFSVFENVGSVLQSFIINNFVPASGDAVHAALQEFIANTGKMTAVGAAFLFVAALMLISNIDKNLNYIWRVKKKRRAVFSFSMYWMVLTLGPILVGASIAATSYITSLRLLDSEAISTVYDQLLRWLPFILSSSAFVGLYLLVPNKKVQFSHAVVGAMIAAVLFELSKKGFAAYITQFPSYQLIYGALAAIPILFVWVYLCWLIVLIGAEVTAALGEREHWRPTEDVIQSLPNNDTELEKDTQRDRFDSES</sequence>
<evidence type="ECO:0000255" key="1">
    <source>
        <dbReference type="HAMAP-Rule" id="MF_00672"/>
    </source>
</evidence>
<evidence type="ECO:0000256" key="2">
    <source>
        <dbReference type="SAM" id="MobiDB-lite"/>
    </source>
</evidence>
<evidence type="ECO:0000305" key="3"/>
<keyword id="KW-0997">Cell inner membrane</keyword>
<keyword id="KW-1003">Cell membrane</keyword>
<keyword id="KW-0472">Membrane</keyword>
<keyword id="KW-0812">Transmembrane</keyword>
<keyword id="KW-1133">Transmembrane helix</keyword>
<feature type="chain" id="PRO_0000201002" description="UPF0761 membrane protein VV0203">
    <location>
        <begin position="1"/>
        <end position="313"/>
    </location>
</feature>
<feature type="transmembrane region" description="Helical" evidence="1">
    <location>
        <begin position="41"/>
        <end position="61"/>
    </location>
</feature>
<feature type="transmembrane region" description="Helical" evidence="1">
    <location>
        <begin position="104"/>
        <end position="124"/>
    </location>
</feature>
<feature type="transmembrane region" description="Helical" evidence="1">
    <location>
        <begin position="139"/>
        <end position="159"/>
    </location>
</feature>
<feature type="transmembrane region" description="Helical" evidence="1">
    <location>
        <begin position="185"/>
        <end position="205"/>
    </location>
</feature>
<feature type="transmembrane region" description="Helical" evidence="1">
    <location>
        <begin position="215"/>
        <end position="235"/>
    </location>
</feature>
<feature type="transmembrane region" description="Helical" evidence="1">
    <location>
        <begin position="249"/>
        <end position="269"/>
    </location>
</feature>
<feature type="region of interest" description="Disordered" evidence="2">
    <location>
        <begin position="293"/>
        <end position="313"/>
    </location>
</feature>
<feature type="compositionally biased region" description="Basic and acidic residues" evidence="2">
    <location>
        <begin position="299"/>
        <end position="313"/>
    </location>
</feature>
<reference key="1">
    <citation type="journal article" date="2003" name="Genome Res.">
        <title>Comparative genome analysis of Vibrio vulnificus, a marine pathogen.</title>
        <authorList>
            <person name="Chen C.-Y."/>
            <person name="Wu K.-M."/>
            <person name="Chang Y.-C."/>
            <person name="Chang C.-H."/>
            <person name="Tsai H.-C."/>
            <person name="Liao T.-L."/>
            <person name="Liu Y.-M."/>
            <person name="Chen H.-J."/>
            <person name="Shen A.B.-T."/>
            <person name="Li J.-C."/>
            <person name="Su T.-L."/>
            <person name="Shao C.-P."/>
            <person name="Lee C.-T."/>
            <person name="Hor L.-I."/>
            <person name="Tsai S.-F."/>
        </authorList>
    </citation>
    <scope>NUCLEOTIDE SEQUENCE [LARGE SCALE GENOMIC DNA]</scope>
    <source>
        <strain>YJ016</strain>
    </source>
</reference>
<name>Y203_VIBVY</name>
<comment type="subcellular location">
    <subcellularLocation>
        <location evidence="1">Cell inner membrane</location>
        <topology evidence="1">Multi-pass membrane protein</topology>
    </subcellularLocation>
</comment>
<comment type="similarity">
    <text evidence="1">Belongs to the UPF0761 family.</text>
</comment>
<comment type="sequence caution" evidence="3">
    <conflict type="erroneous initiation">
        <sequence resource="EMBL-CDS" id="BAC92967"/>
    </conflict>
</comment>
<protein>
    <recommendedName>
        <fullName evidence="1">UPF0761 membrane protein VV0203</fullName>
    </recommendedName>
</protein>
<dbReference type="EMBL" id="BA000037">
    <property type="protein sequence ID" value="BAC92967.1"/>
    <property type="status" value="ALT_INIT"/>
    <property type="molecule type" value="Genomic_DNA"/>
</dbReference>
<dbReference type="RefSeq" id="WP_043877021.1">
    <property type="nucleotide sequence ID" value="NC_005139.1"/>
</dbReference>
<dbReference type="STRING" id="672.VV93_v1c01880"/>
<dbReference type="KEGG" id="vvy:VV0203"/>
<dbReference type="eggNOG" id="COG1295">
    <property type="taxonomic scope" value="Bacteria"/>
</dbReference>
<dbReference type="HOGENOM" id="CLU_032288_0_0_6"/>
<dbReference type="Proteomes" id="UP000002675">
    <property type="component" value="Chromosome I"/>
</dbReference>
<dbReference type="GO" id="GO:0005886">
    <property type="term" value="C:plasma membrane"/>
    <property type="evidence" value="ECO:0007669"/>
    <property type="project" value="UniProtKB-SubCell"/>
</dbReference>
<dbReference type="HAMAP" id="MF_00672">
    <property type="entry name" value="UPF0761"/>
    <property type="match status" value="1"/>
</dbReference>
<dbReference type="InterPro" id="IPR023679">
    <property type="entry name" value="UPF0761_bac"/>
</dbReference>
<dbReference type="InterPro" id="IPR017039">
    <property type="entry name" value="Virul_fac_BrkB"/>
</dbReference>
<dbReference type="NCBIfam" id="NF002457">
    <property type="entry name" value="PRK01637.1"/>
    <property type="match status" value="1"/>
</dbReference>
<dbReference type="NCBIfam" id="TIGR00765">
    <property type="entry name" value="yihY_not_rbn"/>
    <property type="match status" value="1"/>
</dbReference>
<dbReference type="PANTHER" id="PTHR30213">
    <property type="entry name" value="INNER MEMBRANE PROTEIN YHJD"/>
    <property type="match status" value="1"/>
</dbReference>
<dbReference type="PANTHER" id="PTHR30213:SF0">
    <property type="entry name" value="UPF0761 MEMBRANE PROTEIN YIHY"/>
    <property type="match status" value="1"/>
</dbReference>
<dbReference type="Pfam" id="PF03631">
    <property type="entry name" value="Virul_fac_BrkB"/>
    <property type="match status" value="1"/>
</dbReference>
<dbReference type="PIRSF" id="PIRSF035875">
    <property type="entry name" value="RNase_BN"/>
    <property type="match status" value="1"/>
</dbReference>
<gene>
    <name type="ordered locus">VV0203</name>
</gene>
<accession>Q7MQ07</accession>
<proteinExistence type="inferred from homology"/>
<organism>
    <name type="scientific">Vibrio vulnificus (strain YJ016)</name>
    <dbReference type="NCBI Taxonomy" id="196600"/>
    <lineage>
        <taxon>Bacteria</taxon>
        <taxon>Pseudomonadati</taxon>
        <taxon>Pseudomonadota</taxon>
        <taxon>Gammaproteobacteria</taxon>
        <taxon>Vibrionales</taxon>
        <taxon>Vibrionaceae</taxon>
        <taxon>Vibrio</taxon>
    </lineage>
</organism>